<evidence type="ECO:0000250" key="1"/>
<evidence type="ECO:0000250" key="2">
    <source>
        <dbReference type="UniProtKB" id="P00157"/>
    </source>
</evidence>
<evidence type="ECO:0000255" key="3">
    <source>
        <dbReference type="PROSITE-ProRule" id="PRU00967"/>
    </source>
</evidence>
<evidence type="ECO:0000255" key="4">
    <source>
        <dbReference type="PROSITE-ProRule" id="PRU00968"/>
    </source>
</evidence>
<protein>
    <recommendedName>
        <fullName>Cytochrome b</fullName>
    </recommendedName>
    <alternativeName>
        <fullName>Complex III subunit 3</fullName>
    </alternativeName>
    <alternativeName>
        <fullName>Complex III subunit III</fullName>
    </alternativeName>
    <alternativeName>
        <fullName>Cytochrome b-c1 complex subunit 3</fullName>
    </alternativeName>
    <alternativeName>
        <fullName>Ubiquinol-cytochrome-c reductase complex cytochrome b subunit</fullName>
    </alternativeName>
</protein>
<keyword id="KW-0249">Electron transport</keyword>
<keyword id="KW-0349">Heme</keyword>
<keyword id="KW-0408">Iron</keyword>
<keyword id="KW-0472">Membrane</keyword>
<keyword id="KW-0479">Metal-binding</keyword>
<keyword id="KW-0496">Mitochondrion</keyword>
<keyword id="KW-0999">Mitochondrion inner membrane</keyword>
<keyword id="KW-0679">Respiratory chain</keyword>
<keyword id="KW-0812">Transmembrane</keyword>
<keyword id="KW-1133">Transmembrane helix</keyword>
<keyword id="KW-0813">Transport</keyword>
<keyword id="KW-0830">Ubiquinone</keyword>
<feature type="chain" id="PRO_0000060943" description="Cytochrome b">
    <location>
        <begin position="1"/>
        <end position="371"/>
    </location>
</feature>
<feature type="transmembrane region" description="Helical" evidence="2">
    <location>
        <begin position="25"/>
        <end position="45"/>
    </location>
</feature>
<feature type="transmembrane region" description="Helical" evidence="2">
    <location>
        <begin position="69"/>
        <end position="90"/>
    </location>
</feature>
<feature type="transmembrane region" description="Helical" evidence="2">
    <location>
        <begin position="105"/>
        <end position="125"/>
    </location>
</feature>
<feature type="transmembrane region" description="Helical" evidence="2">
    <location>
        <begin position="170"/>
        <end position="190"/>
    </location>
</feature>
<feature type="transmembrane region" description="Helical" evidence="2">
    <location>
        <begin position="218"/>
        <end position="238"/>
    </location>
</feature>
<feature type="transmembrane region" description="Helical" evidence="2">
    <location>
        <begin position="280"/>
        <end position="300"/>
    </location>
</feature>
<feature type="transmembrane region" description="Helical" evidence="2">
    <location>
        <begin position="312"/>
        <end position="332"/>
    </location>
</feature>
<feature type="transmembrane region" description="Helical" evidence="2">
    <location>
        <begin position="339"/>
        <end position="358"/>
    </location>
</feature>
<feature type="binding site" description="axial binding residue" evidence="2">
    <location>
        <position position="75"/>
    </location>
    <ligand>
        <name>heme b</name>
        <dbReference type="ChEBI" id="CHEBI:60344"/>
        <label>b562</label>
    </ligand>
    <ligandPart>
        <name>Fe</name>
        <dbReference type="ChEBI" id="CHEBI:18248"/>
    </ligandPart>
</feature>
<feature type="binding site" description="axial binding residue" evidence="2">
    <location>
        <position position="89"/>
    </location>
    <ligand>
        <name>heme b</name>
        <dbReference type="ChEBI" id="CHEBI:60344"/>
        <label>b566</label>
    </ligand>
    <ligandPart>
        <name>Fe</name>
        <dbReference type="ChEBI" id="CHEBI:18248"/>
    </ligandPart>
</feature>
<feature type="binding site" description="axial binding residue" evidence="2">
    <location>
        <position position="174"/>
    </location>
    <ligand>
        <name>heme b</name>
        <dbReference type="ChEBI" id="CHEBI:60344"/>
        <label>b562</label>
    </ligand>
    <ligandPart>
        <name>Fe</name>
        <dbReference type="ChEBI" id="CHEBI:18248"/>
    </ligandPart>
</feature>
<feature type="binding site" description="axial binding residue" evidence="2">
    <location>
        <position position="188"/>
    </location>
    <ligand>
        <name>heme b</name>
        <dbReference type="ChEBI" id="CHEBI:60344"/>
        <label>b566</label>
    </ligand>
    <ligandPart>
        <name>Fe</name>
        <dbReference type="ChEBI" id="CHEBI:18248"/>
    </ligandPart>
</feature>
<feature type="binding site" evidence="2">
    <location>
        <position position="193"/>
    </location>
    <ligand>
        <name>a ubiquinone</name>
        <dbReference type="ChEBI" id="CHEBI:16389"/>
    </ligand>
</feature>
<comment type="function">
    <text evidence="2">Component of the ubiquinol-cytochrome c reductase complex (complex III or cytochrome b-c1 complex) that is part of the mitochondrial respiratory chain. The b-c1 complex mediates electron transfer from ubiquinol to cytochrome c. Contributes to the generation of a proton gradient across the mitochondrial membrane that is then used for ATP synthesis.</text>
</comment>
<comment type="cofactor">
    <cofactor evidence="2">
        <name>heme b</name>
        <dbReference type="ChEBI" id="CHEBI:60344"/>
    </cofactor>
    <text evidence="2">Binds 2 heme b groups non-covalently.</text>
</comment>
<comment type="subunit">
    <text evidence="2">The cytochrome bc1 complex contains 3 respiratory subunits (MT-CYB, CYC1 and UQCRFS1), 2 core proteins (UQCRC1 and UQCRC2) and probably 6 low-molecular weight proteins.</text>
</comment>
<comment type="subcellular location">
    <subcellularLocation>
        <location evidence="2">Mitochondrion inner membrane</location>
        <topology evidence="2">Multi-pass membrane protein</topology>
    </subcellularLocation>
</comment>
<comment type="miscellaneous">
    <text evidence="1">Heme 1 (or BL or b562) is low-potential and absorbs at about 562 nm, and heme 2 (or BH or b566) is high-potential and absorbs at about 566 nm.</text>
</comment>
<comment type="similarity">
    <text evidence="3 4">Belongs to the cytochrome b family.</text>
</comment>
<comment type="caution">
    <text evidence="2">The full-length protein contains only eight transmembrane helices, not nine as predicted by bioinformatics tools.</text>
</comment>
<accession>O48067</accession>
<gene>
    <name type="primary">MT-CYB</name>
    <name type="synonym">COB</name>
    <name type="synonym">CYTB</name>
    <name type="synonym">MTCYB</name>
</gene>
<dbReference type="EMBL" id="U69812">
    <property type="protein sequence ID" value="AAC01817.1"/>
    <property type="molecule type" value="Genomic_DNA"/>
</dbReference>
<dbReference type="SMR" id="O48067"/>
<dbReference type="GO" id="GO:0005743">
    <property type="term" value="C:mitochondrial inner membrane"/>
    <property type="evidence" value="ECO:0007669"/>
    <property type="project" value="UniProtKB-SubCell"/>
</dbReference>
<dbReference type="GO" id="GO:0045275">
    <property type="term" value="C:respiratory chain complex III"/>
    <property type="evidence" value="ECO:0007669"/>
    <property type="project" value="InterPro"/>
</dbReference>
<dbReference type="GO" id="GO:0046872">
    <property type="term" value="F:metal ion binding"/>
    <property type="evidence" value="ECO:0007669"/>
    <property type="project" value="UniProtKB-KW"/>
</dbReference>
<dbReference type="GO" id="GO:0008121">
    <property type="term" value="F:ubiquinol-cytochrome-c reductase activity"/>
    <property type="evidence" value="ECO:0007669"/>
    <property type="project" value="InterPro"/>
</dbReference>
<dbReference type="GO" id="GO:0006122">
    <property type="term" value="P:mitochondrial electron transport, ubiquinol to cytochrome c"/>
    <property type="evidence" value="ECO:0007669"/>
    <property type="project" value="TreeGrafter"/>
</dbReference>
<dbReference type="CDD" id="cd00290">
    <property type="entry name" value="cytochrome_b_C"/>
    <property type="match status" value="1"/>
</dbReference>
<dbReference type="CDD" id="cd00284">
    <property type="entry name" value="Cytochrome_b_N"/>
    <property type="match status" value="1"/>
</dbReference>
<dbReference type="Gene3D" id="1.20.810.10">
    <property type="entry name" value="Cytochrome Bc1 Complex, Chain C"/>
    <property type="match status" value="1"/>
</dbReference>
<dbReference type="InterPro" id="IPR005798">
    <property type="entry name" value="Cyt_b/b6_C"/>
</dbReference>
<dbReference type="InterPro" id="IPR036150">
    <property type="entry name" value="Cyt_b/b6_C_sf"/>
</dbReference>
<dbReference type="InterPro" id="IPR005797">
    <property type="entry name" value="Cyt_b/b6_N"/>
</dbReference>
<dbReference type="InterPro" id="IPR027387">
    <property type="entry name" value="Cytb/b6-like_sf"/>
</dbReference>
<dbReference type="InterPro" id="IPR030689">
    <property type="entry name" value="Cytochrome_b"/>
</dbReference>
<dbReference type="InterPro" id="IPR048260">
    <property type="entry name" value="Cytochrome_b_C_euk/bac"/>
</dbReference>
<dbReference type="InterPro" id="IPR048259">
    <property type="entry name" value="Cytochrome_b_N_euk/bac"/>
</dbReference>
<dbReference type="InterPro" id="IPR016174">
    <property type="entry name" value="Di-haem_cyt_TM"/>
</dbReference>
<dbReference type="PANTHER" id="PTHR19271">
    <property type="entry name" value="CYTOCHROME B"/>
    <property type="match status" value="1"/>
</dbReference>
<dbReference type="PANTHER" id="PTHR19271:SF16">
    <property type="entry name" value="CYTOCHROME B"/>
    <property type="match status" value="1"/>
</dbReference>
<dbReference type="Pfam" id="PF00032">
    <property type="entry name" value="Cytochrom_B_C"/>
    <property type="match status" value="1"/>
</dbReference>
<dbReference type="Pfam" id="PF00033">
    <property type="entry name" value="Cytochrome_B"/>
    <property type="match status" value="1"/>
</dbReference>
<dbReference type="PIRSF" id="PIRSF038885">
    <property type="entry name" value="COB"/>
    <property type="match status" value="1"/>
</dbReference>
<dbReference type="SUPFAM" id="SSF81648">
    <property type="entry name" value="a domain/subunit of cytochrome bc1 complex (Ubiquinol-cytochrome c reductase)"/>
    <property type="match status" value="1"/>
</dbReference>
<dbReference type="SUPFAM" id="SSF81342">
    <property type="entry name" value="Transmembrane di-heme cytochromes"/>
    <property type="match status" value="1"/>
</dbReference>
<dbReference type="PROSITE" id="PS51003">
    <property type="entry name" value="CYTB_CTER"/>
    <property type="match status" value="1"/>
</dbReference>
<dbReference type="PROSITE" id="PS51002">
    <property type="entry name" value="CYTB_NTER"/>
    <property type="match status" value="1"/>
</dbReference>
<proteinExistence type="inferred from homology"/>
<reference key="1">
    <citation type="thesis" date="1997" institute="Queen's University / Kingston" country="Canada">
        <title>Hic Sunt Serpentes -- molecular phylogenetics and the Boidae (Serpentes: Booidea).</title>
        <authorList>
            <person name="Campbell B.N."/>
        </authorList>
    </citation>
    <scope>NUCLEOTIDE SEQUENCE [GENOMIC DNA]</scope>
</reference>
<geneLocation type="mitochondrion"/>
<sequence length="371" mass="42046">MPHQQILILFGLLPVATNISTWWNFGSMLLACSSMQVLTGFFLAVHYTANINLAFSSIVHITRDVPYGWLMQNLHAIGASMFFICIYTHIARGLYYGSYLNKKTWLSGTTLLIMLMATAFFGYVLPWGQMSFWAATVITNLLTAIPYLGTTMTTWLWGGFAINDPTLTRFFALHFILPFGIISLSSLHIMLLHEDGSSNPLGTNSDIDKIPFHPYHTYKDMLMLSLMVLALLTTVAFFPDIFNDPENFSKANPLVTPQHIKPEWYFLFAYGILRSIPNKLGGALALVMSIMILLTTPFTHTSTIRSMTFRPIMQFMFWTLVATFTVITWAATKPVEPPFTAISQAASTMYFMFFITNPIVGWFENKIMKYN</sequence>
<name>CYB_ERYCL</name>
<organism>
    <name type="scientific">Eryx colubrinus loveridgei</name>
    <dbReference type="NCBI Taxonomy" id="51866"/>
    <lineage>
        <taxon>Eukaryota</taxon>
        <taxon>Metazoa</taxon>
        <taxon>Chordata</taxon>
        <taxon>Craniata</taxon>
        <taxon>Vertebrata</taxon>
        <taxon>Euteleostomi</taxon>
        <taxon>Lepidosauria</taxon>
        <taxon>Squamata</taxon>
        <taxon>Bifurcata</taxon>
        <taxon>Unidentata</taxon>
        <taxon>Episquamata</taxon>
        <taxon>Toxicofera</taxon>
        <taxon>Serpentes</taxon>
        <taxon>Henophidia</taxon>
        <taxon>Boidae</taxon>
        <taxon>Erycinae</taxon>
        <taxon>Eryx</taxon>
    </lineage>
</organism>